<feature type="chain" id="PRO_0000129634" description="Large ribosomal subunit protein uL2">
    <location>
        <begin position="1"/>
        <end position="277"/>
    </location>
</feature>
<feature type="region of interest" description="Disordered" evidence="2">
    <location>
        <begin position="219"/>
        <end position="277"/>
    </location>
</feature>
<feature type="compositionally biased region" description="Basic and acidic residues" evidence="2">
    <location>
        <begin position="264"/>
        <end position="277"/>
    </location>
</feature>
<comment type="function">
    <text evidence="1">One of the primary rRNA binding proteins. Required for association of the 30S and 50S subunits to form the 70S ribosome, for tRNA binding and peptide bond formation. It has been suggested to have peptidyltransferase activity; this is somewhat controversial. Makes several contacts with the 16S rRNA in the 70S ribosome.</text>
</comment>
<comment type="subunit">
    <text evidence="1">Part of the 50S ribosomal subunit. Forms a bridge to the 30S subunit in the 70S ribosome.</text>
</comment>
<comment type="similarity">
    <text evidence="1">Belongs to the universal ribosomal protein uL2 family.</text>
</comment>
<sequence length="277" mass="29876">MGIKVYKPTTNGRRNMTSLDFAEITTSTPEKSLLVSLKSKAGRNNNGRITVRHQGGGHKRHYRLIDFKRNKDGVEAVVKTIEYDPNRTANIALVHYTDGVKAYIIAPKGLEVGQRIVSGPDADIKVGNALPLANIPVGTVVHNIELKPGKGGELVRAAGASAQVLGQEGKYVLVRLQSGEVRMILGTCRATIGTVGNEQQSLVNIGKAGRSRWKGIRPTVRGSVMNPNDHPHGGGEGKAPVGRKAPSTPWGKPALGLKTRNKKAKSDKLIVRRRNEK</sequence>
<accession>Q5XED2</accession>
<dbReference type="EMBL" id="CP000003">
    <property type="protein sequence ID" value="AAT86231.1"/>
    <property type="molecule type" value="Genomic_DNA"/>
</dbReference>
<dbReference type="RefSeq" id="WP_002986654.1">
    <property type="nucleotide sequence ID" value="NC_006086.1"/>
</dbReference>
<dbReference type="SMR" id="Q5XED2"/>
<dbReference type="GeneID" id="83689570"/>
<dbReference type="KEGG" id="spa:M6_Spy0096"/>
<dbReference type="HOGENOM" id="CLU_036235_2_1_9"/>
<dbReference type="Proteomes" id="UP000001167">
    <property type="component" value="Chromosome"/>
</dbReference>
<dbReference type="GO" id="GO:0015934">
    <property type="term" value="C:large ribosomal subunit"/>
    <property type="evidence" value="ECO:0007669"/>
    <property type="project" value="InterPro"/>
</dbReference>
<dbReference type="GO" id="GO:0019843">
    <property type="term" value="F:rRNA binding"/>
    <property type="evidence" value="ECO:0007669"/>
    <property type="project" value="UniProtKB-UniRule"/>
</dbReference>
<dbReference type="GO" id="GO:0003735">
    <property type="term" value="F:structural constituent of ribosome"/>
    <property type="evidence" value="ECO:0007669"/>
    <property type="project" value="InterPro"/>
</dbReference>
<dbReference type="GO" id="GO:0016740">
    <property type="term" value="F:transferase activity"/>
    <property type="evidence" value="ECO:0007669"/>
    <property type="project" value="InterPro"/>
</dbReference>
<dbReference type="GO" id="GO:0002181">
    <property type="term" value="P:cytoplasmic translation"/>
    <property type="evidence" value="ECO:0007669"/>
    <property type="project" value="TreeGrafter"/>
</dbReference>
<dbReference type="FunFam" id="2.30.30.30:FF:000001">
    <property type="entry name" value="50S ribosomal protein L2"/>
    <property type="match status" value="1"/>
</dbReference>
<dbReference type="FunFam" id="2.40.50.140:FF:000003">
    <property type="entry name" value="50S ribosomal protein L2"/>
    <property type="match status" value="1"/>
</dbReference>
<dbReference type="FunFam" id="4.10.950.10:FF:000001">
    <property type="entry name" value="50S ribosomal protein L2"/>
    <property type="match status" value="1"/>
</dbReference>
<dbReference type="Gene3D" id="2.30.30.30">
    <property type="match status" value="1"/>
</dbReference>
<dbReference type="Gene3D" id="2.40.50.140">
    <property type="entry name" value="Nucleic acid-binding proteins"/>
    <property type="match status" value="1"/>
</dbReference>
<dbReference type="Gene3D" id="4.10.950.10">
    <property type="entry name" value="Ribosomal protein L2, domain 3"/>
    <property type="match status" value="1"/>
</dbReference>
<dbReference type="HAMAP" id="MF_01320_B">
    <property type="entry name" value="Ribosomal_uL2_B"/>
    <property type="match status" value="1"/>
</dbReference>
<dbReference type="InterPro" id="IPR012340">
    <property type="entry name" value="NA-bd_OB-fold"/>
</dbReference>
<dbReference type="InterPro" id="IPR014722">
    <property type="entry name" value="Rib_uL2_dom2"/>
</dbReference>
<dbReference type="InterPro" id="IPR002171">
    <property type="entry name" value="Ribosomal_uL2"/>
</dbReference>
<dbReference type="InterPro" id="IPR005880">
    <property type="entry name" value="Ribosomal_uL2_bac/org-type"/>
</dbReference>
<dbReference type="InterPro" id="IPR022669">
    <property type="entry name" value="Ribosomal_uL2_C"/>
</dbReference>
<dbReference type="InterPro" id="IPR022671">
    <property type="entry name" value="Ribosomal_uL2_CS"/>
</dbReference>
<dbReference type="InterPro" id="IPR014726">
    <property type="entry name" value="Ribosomal_uL2_dom3"/>
</dbReference>
<dbReference type="InterPro" id="IPR022666">
    <property type="entry name" value="Ribosomal_uL2_RNA-bd_dom"/>
</dbReference>
<dbReference type="InterPro" id="IPR008991">
    <property type="entry name" value="Translation_prot_SH3-like_sf"/>
</dbReference>
<dbReference type="NCBIfam" id="TIGR01171">
    <property type="entry name" value="rplB_bact"/>
    <property type="match status" value="1"/>
</dbReference>
<dbReference type="PANTHER" id="PTHR13691:SF5">
    <property type="entry name" value="LARGE RIBOSOMAL SUBUNIT PROTEIN UL2M"/>
    <property type="match status" value="1"/>
</dbReference>
<dbReference type="PANTHER" id="PTHR13691">
    <property type="entry name" value="RIBOSOMAL PROTEIN L2"/>
    <property type="match status" value="1"/>
</dbReference>
<dbReference type="Pfam" id="PF00181">
    <property type="entry name" value="Ribosomal_L2"/>
    <property type="match status" value="1"/>
</dbReference>
<dbReference type="Pfam" id="PF03947">
    <property type="entry name" value="Ribosomal_L2_C"/>
    <property type="match status" value="1"/>
</dbReference>
<dbReference type="PIRSF" id="PIRSF002158">
    <property type="entry name" value="Ribosomal_L2"/>
    <property type="match status" value="1"/>
</dbReference>
<dbReference type="SMART" id="SM01383">
    <property type="entry name" value="Ribosomal_L2"/>
    <property type="match status" value="1"/>
</dbReference>
<dbReference type="SMART" id="SM01382">
    <property type="entry name" value="Ribosomal_L2_C"/>
    <property type="match status" value="1"/>
</dbReference>
<dbReference type="SUPFAM" id="SSF50249">
    <property type="entry name" value="Nucleic acid-binding proteins"/>
    <property type="match status" value="1"/>
</dbReference>
<dbReference type="SUPFAM" id="SSF50104">
    <property type="entry name" value="Translation proteins SH3-like domain"/>
    <property type="match status" value="1"/>
</dbReference>
<dbReference type="PROSITE" id="PS00467">
    <property type="entry name" value="RIBOSOMAL_L2"/>
    <property type="match status" value="1"/>
</dbReference>
<protein>
    <recommendedName>
        <fullName evidence="1">Large ribosomal subunit protein uL2</fullName>
    </recommendedName>
    <alternativeName>
        <fullName evidence="3">50S ribosomal protein L2</fullName>
    </alternativeName>
</protein>
<name>RL2_STRP6</name>
<proteinExistence type="inferred from homology"/>
<evidence type="ECO:0000255" key="1">
    <source>
        <dbReference type="HAMAP-Rule" id="MF_01320"/>
    </source>
</evidence>
<evidence type="ECO:0000256" key="2">
    <source>
        <dbReference type="SAM" id="MobiDB-lite"/>
    </source>
</evidence>
<evidence type="ECO:0000305" key="3"/>
<gene>
    <name evidence="1" type="primary">rplB</name>
    <name type="ordered locus">M6_Spy0096</name>
</gene>
<reference key="1">
    <citation type="journal article" date="2004" name="J. Infect. Dis.">
        <title>Progress toward characterization of the group A Streptococcus metagenome: complete genome sequence of a macrolide-resistant serotype M6 strain.</title>
        <authorList>
            <person name="Banks D.J."/>
            <person name="Porcella S.F."/>
            <person name="Barbian K.D."/>
            <person name="Beres S.B."/>
            <person name="Philips L.E."/>
            <person name="Voyich J.M."/>
            <person name="DeLeo F.R."/>
            <person name="Martin J.M."/>
            <person name="Somerville G.A."/>
            <person name="Musser J.M."/>
        </authorList>
    </citation>
    <scope>NUCLEOTIDE SEQUENCE [LARGE SCALE GENOMIC DNA]</scope>
    <source>
        <strain>ATCC BAA-946 / MGAS10394</strain>
    </source>
</reference>
<keyword id="KW-0687">Ribonucleoprotein</keyword>
<keyword id="KW-0689">Ribosomal protein</keyword>
<keyword id="KW-0694">RNA-binding</keyword>
<keyword id="KW-0699">rRNA-binding</keyword>
<organism>
    <name type="scientific">Streptococcus pyogenes serotype M6 (strain ATCC BAA-946 / MGAS10394)</name>
    <dbReference type="NCBI Taxonomy" id="286636"/>
    <lineage>
        <taxon>Bacteria</taxon>
        <taxon>Bacillati</taxon>
        <taxon>Bacillota</taxon>
        <taxon>Bacilli</taxon>
        <taxon>Lactobacillales</taxon>
        <taxon>Streptococcaceae</taxon>
        <taxon>Streptococcus</taxon>
    </lineage>
</organism>